<protein>
    <recommendedName>
        <fullName evidence="3">Nitrate import ATP-binding protein NrtC</fullName>
        <ecNumber evidence="1">7.3.2.4</ecNumber>
    </recommendedName>
</protein>
<feature type="chain" id="PRO_0000092647" description="Nitrate import ATP-binding protein NrtC">
    <location>
        <begin position="1"/>
        <end position="670"/>
    </location>
</feature>
<feature type="domain" description="ABC transporter" evidence="2">
    <location>
        <begin position="5"/>
        <end position="239"/>
    </location>
</feature>
<feature type="region of interest" description="Linker" evidence="1">
    <location>
        <begin position="255"/>
        <end position="278"/>
    </location>
</feature>
<feature type="region of interest" description="NrtA-like" evidence="1">
    <location>
        <begin position="279"/>
        <end position="670"/>
    </location>
</feature>
<feature type="binding site" evidence="2">
    <location>
        <begin position="42"/>
        <end position="49"/>
    </location>
    <ligand>
        <name>ATP</name>
        <dbReference type="ChEBI" id="CHEBI:30616"/>
    </ligand>
</feature>
<comment type="function">
    <text evidence="1">Part of the ABC transporter complex NrtABCD involved in nitrate uptake. The complex is probably also involved in nitrite transport. Probably responsible for energy coupling to the transport system.</text>
</comment>
<comment type="catalytic activity">
    <reaction evidence="1">
        <text>nitrate(out) + ATP + H2O = nitrate(in) + ADP + phosphate + H(+)</text>
        <dbReference type="Rhea" id="RHEA:13181"/>
        <dbReference type="ChEBI" id="CHEBI:15377"/>
        <dbReference type="ChEBI" id="CHEBI:15378"/>
        <dbReference type="ChEBI" id="CHEBI:17632"/>
        <dbReference type="ChEBI" id="CHEBI:30616"/>
        <dbReference type="ChEBI" id="CHEBI:43474"/>
        <dbReference type="ChEBI" id="CHEBI:456216"/>
        <dbReference type="EC" id="7.3.2.4"/>
    </reaction>
</comment>
<comment type="subunit">
    <text evidence="1">The complex is composed of two ATP-binding proteins (NrtC and NrtD), two transmembrane proteins (NrtB) and a solute-binding protein (NrtA).</text>
</comment>
<comment type="subcellular location">
    <subcellularLocation>
        <location evidence="1">Cell inner membrane</location>
        <topology evidence="1">Peripheral membrane protein</topology>
        <orientation evidence="1">Cytoplasmic side</orientation>
    </subcellularLocation>
</comment>
<comment type="domain">
    <text evidence="1">Contains an ATP-binding N-terminal domain and a NrtA-like C-terminal domain, which are connected by a segment containing an abundance of glutamine, alanine and positively charged amino acids. The N-terminal domain is required for activity and the C-terminal domain is involved in regulation of the activity.</text>
</comment>
<comment type="similarity">
    <text evidence="3">Belongs to the ABC transporter superfamily. Nitrate/nitrite/cyanate uptake transporter (NitT) (TC 3.A.1.16) family.</text>
</comment>
<accession>P73450</accession>
<reference key="1">
    <citation type="journal article" date="1996" name="DNA Res.">
        <title>Sequence analysis of the genome of the unicellular cyanobacterium Synechocystis sp. strain PCC6803. II. Sequence determination of the entire genome and assignment of potential protein-coding regions.</title>
        <authorList>
            <person name="Kaneko T."/>
            <person name="Sato S."/>
            <person name="Kotani H."/>
            <person name="Tanaka A."/>
            <person name="Asamizu E."/>
            <person name="Nakamura Y."/>
            <person name="Miyajima N."/>
            <person name="Hirosawa M."/>
            <person name="Sugiura M."/>
            <person name="Sasamoto S."/>
            <person name="Kimura T."/>
            <person name="Hosouchi T."/>
            <person name="Matsuno A."/>
            <person name="Muraki A."/>
            <person name="Nakazaki N."/>
            <person name="Naruo K."/>
            <person name="Okumura S."/>
            <person name="Shimpo S."/>
            <person name="Takeuchi C."/>
            <person name="Wada T."/>
            <person name="Watanabe A."/>
            <person name="Yamada M."/>
            <person name="Yasuda M."/>
            <person name="Tabata S."/>
        </authorList>
    </citation>
    <scope>NUCLEOTIDE SEQUENCE [LARGE SCALE GENOMIC DNA]</scope>
    <source>
        <strain>ATCC 27184 / PCC 6803 / Kazusa</strain>
    </source>
</reference>
<proteinExistence type="inferred from homology"/>
<sequence length="670" mass="75101">MMPFIEIDHVDRIFPLPDGGRYIALKNIELKISQGEFISLIGHSGCGKSTLLNMISGLDKPTFGGVIMEGKEITEPGPERMVVFQNYSLLPWLTVRQNIALAVNRVLRDLPKPEQEKIIDDNIALVGLQRAAHKRPGELSGGMKQRVAIARALSTRPKVLLLDEPFGALDALTRGNLQERLMEIVQESGVTCIMVTHDVDEALLLSDRVVMLTTGPEAHIGQILEVPIPRPRHRLEVVNHPSYYALRGEMVYFLNQQKRAKKVGAVSQFAEAMGGNGLEKINLDLGFIPLTDCAPLVVAKEKGFFQKHGLEQVNLVKEPSWQAIADGIRERRLDGAQMVAGMPLALTLGMGGKTPLPMVTAMVMSRNGNAITLSKKFAEAGVKTLEDLRLKLAETPDQVSTLGMVHPASMQNLLLRYWLASGSIDPDQDINLMRLPPPQMVSNLEAGNIDGFCVGEPWNSYAVKQNLGYVIATDLDIWNGHPEKVLGMREEWVNKYPATHLALVKALLEACEYCDDRRHRQEILDYLALPQYVGTSTEYISPGFLTEYDQGNDAEAEMLLDFNQFYVKQSNYPSRSEGLWILTQLARWGYIDFPKNWVEIIERVRRPDLFGEACRHLGWPDLEGDHHNVSLFDGMVFTPNDPLGYIKRFTIHRDIQVTEILIDQIDQVNQ</sequence>
<evidence type="ECO:0000250" key="1">
    <source>
        <dbReference type="UniProtKB" id="P38045"/>
    </source>
</evidence>
<evidence type="ECO:0000255" key="2">
    <source>
        <dbReference type="PROSITE-ProRule" id="PRU00434"/>
    </source>
</evidence>
<evidence type="ECO:0000305" key="3"/>
<name>NRTC_SYNY3</name>
<organism>
    <name type="scientific">Synechocystis sp. (strain ATCC 27184 / PCC 6803 / Kazusa)</name>
    <dbReference type="NCBI Taxonomy" id="1111708"/>
    <lineage>
        <taxon>Bacteria</taxon>
        <taxon>Bacillati</taxon>
        <taxon>Cyanobacteriota</taxon>
        <taxon>Cyanophyceae</taxon>
        <taxon>Synechococcales</taxon>
        <taxon>Merismopediaceae</taxon>
        <taxon>Synechocystis</taxon>
    </lineage>
</organism>
<keyword id="KW-0067">ATP-binding</keyword>
<keyword id="KW-0997">Cell inner membrane</keyword>
<keyword id="KW-1003">Cell membrane</keyword>
<keyword id="KW-0406">Ion transport</keyword>
<keyword id="KW-0472">Membrane</keyword>
<keyword id="KW-0534">Nitrate assimilation</keyword>
<keyword id="KW-0547">Nucleotide-binding</keyword>
<keyword id="KW-1185">Reference proteome</keyword>
<keyword id="KW-1278">Translocase</keyword>
<keyword id="KW-0813">Transport</keyword>
<gene>
    <name type="primary">nrtC</name>
    <name type="ordered locus">sll1452</name>
</gene>
<dbReference type="EC" id="7.3.2.4" evidence="1"/>
<dbReference type="EMBL" id="BA000022">
    <property type="protein sequence ID" value="BAA17490.1"/>
    <property type="molecule type" value="Genomic_DNA"/>
</dbReference>
<dbReference type="PIR" id="S77387">
    <property type="entry name" value="S77387"/>
</dbReference>
<dbReference type="SMR" id="P73450"/>
<dbReference type="IntAct" id="P73450">
    <property type="interactions" value="3"/>
</dbReference>
<dbReference type="STRING" id="1148.gene:10498355"/>
<dbReference type="PaxDb" id="1148-1652569"/>
<dbReference type="EnsemblBacteria" id="BAA17490">
    <property type="protein sequence ID" value="BAA17490"/>
    <property type="gene ID" value="BAA17490"/>
</dbReference>
<dbReference type="KEGG" id="syn:sll1452"/>
<dbReference type="eggNOG" id="COG0715">
    <property type="taxonomic scope" value="Bacteria"/>
</dbReference>
<dbReference type="eggNOG" id="COG1116">
    <property type="taxonomic scope" value="Bacteria"/>
</dbReference>
<dbReference type="InParanoid" id="P73450"/>
<dbReference type="PhylomeDB" id="P73450"/>
<dbReference type="Proteomes" id="UP000001425">
    <property type="component" value="Chromosome"/>
</dbReference>
<dbReference type="GO" id="GO:0005886">
    <property type="term" value="C:plasma membrane"/>
    <property type="evidence" value="ECO:0007669"/>
    <property type="project" value="UniProtKB-SubCell"/>
</dbReference>
<dbReference type="GO" id="GO:0015414">
    <property type="term" value="F:ABC-type nitrate transporter activity"/>
    <property type="evidence" value="ECO:0007669"/>
    <property type="project" value="UniProtKB-EC"/>
</dbReference>
<dbReference type="GO" id="GO:0005524">
    <property type="term" value="F:ATP binding"/>
    <property type="evidence" value="ECO:0007669"/>
    <property type="project" value="UniProtKB-KW"/>
</dbReference>
<dbReference type="GO" id="GO:0016887">
    <property type="term" value="F:ATP hydrolysis activity"/>
    <property type="evidence" value="ECO:0007669"/>
    <property type="project" value="InterPro"/>
</dbReference>
<dbReference type="GO" id="GO:0042128">
    <property type="term" value="P:nitrate assimilation"/>
    <property type="evidence" value="ECO:0007669"/>
    <property type="project" value="UniProtKB-KW"/>
</dbReference>
<dbReference type="CDD" id="cd03293">
    <property type="entry name" value="ABC_NrtD_SsuB_transporters"/>
    <property type="match status" value="1"/>
</dbReference>
<dbReference type="CDD" id="cd13553">
    <property type="entry name" value="PBP2_NrtA_CpmA_like"/>
    <property type="match status" value="1"/>
</dbReference>
<dbReference type="Gene3D" id="3.40.50.300">
    <property type="entry name" value="P-loop containing nucleotide triphosphate hydrolases"/>
    <property type="match status" value="1"/>
</dbReference>
<dbReference type="Gene3D" id="3.40.190.10">
    <property type="entry name" value="Periplasmic binding protein-like II"/>
    <property type="match status" value="2"/>
</dbReference>
<dbReference type="InterPro" id="IPR003593">
    <property type="entry name" value="AAA+_ATPase"/>
</dbReference>
<dbReference type="InterPro" id="IPR050093">
    <property type="entry name" value="ABC_SmlMolc_Importer"/>
</dbReference>
<dbReference type="InterPro" id="IPR003439">
    <property type="entry name" value="ABC_transporter-like_ATP-bd"/>
</dbReference>
<dbReference type="InterPro" id="IPR017871">
    <property type="entry name" value="ABC_transporter-like_CS"/>
</dbReference>
<dbReference type="InterPro" id="IPR005890">
    <property type="entry name" value="NO3_transporter_ATP-bd-like"/>
</dbReference>
<dbReference type="InterPro" id="IPR044527">
    <property type="entry name" value="NrtA/CpmA_ABC-bd_dom"/>
</dbReference>
<dbReference type="InterPro" id="IPR027417">
    <property type="entry name" value="P-loop_NTPase"/>
</dbReference>
<dbReference type="NCBIfam" id="TIGR01184">
    <property type="entry name" value="ntrCD"/>
    <property type="match status" value="1"/>
</dbReference>
<dbReference type="PANTHER" id="PTHR42781:SF8">
    <property type="entry name" value="BICARBONATE TRANSPORT ATP-BINDING PROTEIN CMPC"/>
    <property type="match status" value="1"/>
</dbReference>
<dbReference type="PANTHER" id="PTHR42781">
    <property type="entry name" value="SPERMIDINE/PUTRESCINE IMPORT ATP-BINDING PROTEIN POTA"/>
    <property type="match status" value="1"/>
</dbReference>
<dbReference type="Pfam" id="PF00005">
    <property type="entry name" value="ABC_tran"/>
    <property type="match status" value="1"/>
</dbReference>
<dbReference type="Pfam" id="PF13379">
    <property type="entry name" value="NMT1_2"/>
    <property type="match status" value="1"/>
</dbReference>
<dbReference type="SMART" id="SM00382">
    <property type="entry name" value="AAA"/>
    <property type="match status" value="1"/>
</dbReference>
<dbReference type="SUPFAM" id="SSF52540">
    <property type="entry name" value="P-loop containing nucleoside triphosphate hydrolases"/>
    <property type="match status" value="1"/>
</dbReference>
<dbReference type="SUPFAM" id="SSF53850">
    <property type="entry name" value="Periplasmic binding protein-like II"/>
    <property type="match status" value="1"/>
</dbReference>
<dbReference type="PROSITE" id="PS00211">
    <property type="entry name" value="ABC_TRANSPORTER_1"/>
    <property type="match status" value="1"/>
</dbReference>
<dbReference type="PROSITE" id="PS50893">
    <property type="entry name" value="ABC_TRANSPORTER_2"/>
    <property type="match status" value="1"/>
</dbReference>